<gene>
    <name type="primary">dph-1</name>
    <name type="ORF">C14B1.5</name>
</gene>
<name>DPH1_CAEEL</name>
<organism>
    <name type="scientific">Caenorhabditis elegans</name>
    <dbReference type="NCBI Taxonomy" id="6239"/>
    <lineage>
        <taxon>Eukaryota</taxon>
        <taxon>Metazoa</taxon>
        <taxon>Ecdysozoa</taxon>
        <taxon>Nematoda</taxon>
        <taxon>Chromadorea</taxon>
        <taxon>Rhabditida</taxon>
        <taxon>Rhabditina</taxon>
        <taxon>Rhabditomorpha</taxon>
        <taxon>Rhabditoidea</taxon>
        <taxon>Rhabditidae</taxon>
        <taxon>Peloderinae</taxon>
        <taxon>Caenorhabditis</taxon>
    </lineage>
</organism>
<feature type="chain" id="PRO_0000065177" description="2-(3-amino-3-carboxypropyl)histidine synthase subunit 1">
    <location>
        <begin position="1"/>
        <end position="396"/>
    </location>
</feature>
<feature type="region of interest" description="Disordered" evidence="4">
    <location>
        <begin position="372"/>
        <end position="396"/>
    </location>
</feature>
<feature type="binding site" evidence="1">
    <location>
        <position position="89"/>
    </location>
    <ligand>
        <name>[4Fe-4S] cluster</name>
        <dbReference type="ChEBI" id="CHEBI:49883"/>
    </ligand>
</feature>
<feature type="binding site" evidence="1">
    <location>
        <position position="194"/>
    </location>
    <ligand>
        <name>[4Fe-4S] cluster</name>
        <dbReference type="ChEBI" id="CHEBI:49883"/>
    </ligand>
</feature>
<feature type="binding site" evidence="1">
    <location>
        <position position="323"/>
    </location>
    <ligand>
        <name>[4Fe-4S] cluster</name>
        <dbReference type="ChEBI" id="CHEBI:49883"/>
    </ligand>
</feature>
<proteinExistence type="inferred from homology"/>
<comment type="function">
    <text evidence="2 3">Catalyzes the first step of diphthamide biosynthesis, a post-translational modification of histidine which occurs in elongation factor 2 (By similarity). Dph-1 and dph-2 transfer a 3-amino-3-carboxypropyl (ACP) group from S-adenosyl-L-methionine (SAM) to a histidine residue, the reaction is assisted by a reduction system comprising dph-3 and a NADH-dependent reductase (By similarity).</text>
</comment>
<comment type="catalytic activity">
    <reaction evidence="3">
        <text>L-histidyl-[translation elongation factor 2] + S-adenosyl-L-methionine = 2-[(3S)-amino-3-carboxypropyl]-L-histidyl-[translation elongation factor 2] + S-methyl-5'-thioadenosine + H(+)</text>
        <dbReference type="Rhea" id="RHEA:36783"/>
        <dbReference type="Rhea" id="RHEA-COMP:9748"/>
        <dbReference type="Rhea" id="RHEA-COMP:9749"/>
        <dbReference type="ChEBI" id="CHEBI:15378"/>
        <dbReference type="ChEBI" id="CHEBI:17509"/>
        <dbReference type="ChEBI" id="CHEBI:29979"/>
        <dbReference type="ChEBI" id="CHEBI:59789"/>
        <dbReference type="ChEBI" id="CHEBI:73995"/>
        <dbReference type="EC" id="2.5.1.108"/>
    </reaction>
</comment>
<comment type="cofactor">
    <cofactor evidence="2">
        <name>[4Fe-4S] cluster</name>
        <dbReference type="ChEBI" id="CHEBI:49883"/>
    </cofactor>
    <text evidence="2">Binds 1 [4Fe-4S] cluster per subunit. The cluster is coordinated with 3 cysteines and an exchangeable S-adenosyl-L-methionine.</text>
</comment>
<comment type="pathway">
    <text>Protein modification; peptidyl-diphthamide biosynthesis.</text>
</comment>
<comment type="subunit">
    <text evidence="2">Component of the 2-(3-amino-3-carboxypropyl)histidine synthase complex composed of dph-1, dph-2, dph-3 and a NADH-dependent reductase.</text>
</comment>
<comment type="similarity">
    <text evidence="5">Belongs to the DPH1/DPH2 family. DPH1 subfamily.</text>
</comment>
<sequence length="396" mass="45012">MATRATQISTLVEEIANNPNLKEDLKILPSNYTFEVPKTIWKIRSTESKYVALQFPEGLIMYACVIADILEKYTGCDTVIMGDVTYGACCVDDYTAKSMGCDLLVHYGHSCLVPIQNTDGIAMLYVFVNIHINLSHLIDCVKENFQGKRLVVVSTVQFIPSLQTLRTTFNKDDSSIRIDIPQCKPLSPGEVLGCTSPRLDASKYDAIVYLGDGRFHLESIMIHNPEIEAFQYDPYSRKLTREFYDHDLMRKNRIGSIEIARKCTTFGLIQGTLGRQGNLKVVEELEAQLERKGKKFLRVLLSEIFPEKLAMFPEVDCWVQVACPRLSIDWGTQFPKPLLYPFELAVALDNISVPSDHWPMDYYSNDSLGPWTNNNEANRPKREKRKPHIVVRTEAS</sequence>
<evidence type="ECO:0000250" key="1">
    <source>
        <dbReference type="UniProtKB" id="O58832"/>
    </source>
</evidence>
<evidence type="ECO:0000250" key="2">
    <source>
        <dbReference type="UniProtKB" id="P40487"/>
    </source>
</evidence>
<evidence type="ECO:0000250" key="3">
    <source>
        <dbReference type="UniProtKB" id="Q5NCQ5"/>
    </source>
</evidence>
<evidence type="ECO:0000256" key="4">
    <source>
        <dbReference type="SAM" id="MobiDB-lite"/>
    </source>
</evidence>
<evidence type="ECO:0000305" key="5"/>
<accession>P49958</accession>
<reference key="1">
    <citation type="journal article" date="1998" name="Science">
        <title>Genome sequence of the nematode C. elegans: a platform for investigating biology.</title>
        <authorList>
            <consortium name="The C. elegans sequencing consortium"/>
        </authorList>
    </citation>
    <scope>NUCLEOTIDE SEQUENCE [LARGE SCALE GENOMIC DNA]</scope>
    <source>
        <strain>Bristol N2</strain>
    </source>
</reference>
<dbReference type="EC" id="2.5.1.108" evidence="3"/>
<dbReference type="EMBL" id="Z37139">
    <property type="protein sequence ID" value="CAA85493.1"/>
    <property type="molecule type" value="Genomic_DNA"/>
</dbReference>
<dbReference type="PIR" id="T19272">
    <property type="entry name" value="T19272"/>
</dbReference>
<dbReference type="RefSeq" id="NP_497750.1">
    <property type="nucleotide sequence ID" value="NM_065349.7"/>
</dbReference>
<dbReference type="SMR" id="P49958"/>
<dbReference type="BioGRID" id="40715">
    <property type="interactions" value="5"/>
</dbReference>
<dbReference type="FunCoup" id="P49958">
    <property type="interactions" value="2191"/>
</dbReference>
<dbReference type="IntAct" id="P49958">
    <property type="interactions" value="1"/>
</dbReference>
<dbReference type="STRING" id="6239.C14B1.5.1"/>
<dbReference type="PaxDb" id="6239-C14B1.5"/>
<dbReference type="PeptideAtlas" id="P49958"/>
<dbReference type="EnsemblMetazoa" id="C14B1.5.1">
    <property type="protein sequence ID" value="C14B1.5.1"/>
    <property type="gene ID" value="WBGene00007576"/>
</dbReference>
<dbReference type="GeneID" id="175475"/>
<dbReference type="KEGG" id="cel:CELE_C14B1.5"/>
<dbReference type="UCSC" id="C14B1.5">
    <property type="organism name" value="c. elegans"/>
</dbReference>
<dbReference type="AGR" id="WB:WBGene00007576"/>
<dbReference type="CTD" id="175475"/>
<dbReference type="WormBase" id="C14B1.5">
    <property type="protein sequence ID" value="CE17401"/>
    <property type="gene ID" value="WBGene00007576"/>
    <property type="gene designation" value="dph-1"/>
</dbReference>
<dbReference type="eggNOG" id="KOG2648">
    <property type="taxonomic scope" value="Eukaryota"/>
</dbReference>
<dbReference type="GeneTree" id="ENSGT00940000153694"/>
<dbReference type="HOGENOM" id="CLU_037146_1_1_1"/>
<dbReference type="InParanoid" id="P49958"/>
<dbReference type="OMA" id="PGQVLGC"/>
<dbReference type="OrthoDB" id="1649088at2759"/>
<dbReference type="PhylomeDB" id="P49958"/>
<dbReference type="Reactome" id="R-CEL-5358493">
    <property type="pathway name" value="Synthesis of diphthamide-EEF2"/>
</dbReference>
<dbReference type="UniPathway" id="UPA00559"/>
<dbReference type="PRO" id="PR:P49958"/>
<dbReference type="Proteomes" id="UP000001940">
    <property type="component" value="Chromosome III"/>
</dbReference>
<dbReference type="Bgee" id="WBGene00007576">
    <property type="expression patterns" value="Expressed in embryo and 4 other cell types or tissues"/>
</dbReference>
<dbReference type="GO" id="GO:0120513">
    <property type="term" value="C:2-(3-amino-3-carboxypropyl)histidine synthase complex"/>
    <property type="evidence" value="ECO:0000250"/>
    <property type="project" value="UniProtKB"/>
</dbReference>
<dbReference type="GO" id="GO:0090560">
    <property type="term" value="F:2-(3-amino-3-carboxypropyl)histidine synthase activity"/>
    <property type="evidence" value="ECO:0007669"/>
    <property type="project" value="UniProtKB-EC"/>
</dbReference>
<dbReference type="GO" id="GO:0051539">
    <property type="term" value="F:4 iron, 4 sulfur cluster binding"/>
    <property type="evidence" value="ECO:0000250"/>
    <property type="project" value="UniProtKB"/>
</dbReference>
<dbReference type="GO" id="GO:0046872">
    <property type="term" value="F:metal ion binding"/>
    <property type="evidence" value="ECO:0007669"/>
    <property type="project" value="UniProtKB-KW"/>
</dbReference>
<dbReference type="GO" id="GO:0017183">
    <property type="term" value="P:protein histidyl modification to diphthamide"/>
    <property type="evidence" value="ECO:0000250"/>
    <property type="project" value="UniProtKB"/>
</dbReference>
<dbReference type="FunFam" id="3.40.50.11840:FF:000001">
    <property type="entry name" value="2-(3-amino-3-carboxypropyl)histidine synthase subunit 1"/>
    <property type="match status" value="1"/>
</dbReference>
<dbReference type="FunFam" id="3.40.50.11850:FF:000001">
    <property type="entry name" value="2-(3-amino-3-carboxypropyl)histidine synthase subunit 1"/>
    <property type="match status" value="1"/>
</dbReference>
<dbReference type="FunFam" id="3.40.50.11860:FF:000002">
    <property type="entry name" value="2-(3-amino-3-carboxypropyl)histidine synthase subunit 1"/>
    <property type="match status" value="1"/>
</dbReference>
<dbReference type="Gene3D" id="3.40.50.11840">
    <property type="entry name" value="Diphthamide synthesis DPH1/DPH2 domain 1"/>
    <property type="match status" value="1"/>
</dbReference>
<dbReference type="Gene3D" id="3.40.50.11850">
    <property type="entry name" value="Diphthamide synthesis DPH1/DPH2 domain 2"/>
    <property type="match status" value="1"/>
</dbReference>
<dbReference type="Gene3D" id="3.40.50.11860">
    <property type="entry name" value="Diphthamide synthesis DPH1/DPH2 domain 3"/>
    <property type="match status" value="1"/>
</dbReference>
<dbReference type="InterPro" id="IPR016435">
    <property type="entry name" value="DPH1/DPH2"/>
</dbReference>
<dbReference type="InterPro" id="IPR042263">
    <property type="entry name" value="DPH1/DPH2_1"/>
</dbReference>
<dbReference type="InterPro" id="IPR042264">
    <property type="entry name" value="DPH1/DPH2_2"/>
</dbReference>
<dbReference type="InterPro" id="IPR042265">
    <property type="entry name" value="DPH1/DPH2_3"/>
</dbReference>
<dbReference type="InterPro" id="IPR035435">
    <property type="entry name" value="DPH1/DPH2_euk_archaea"/>
</dbReference>
<dbReference type="NCBIfam" id="TIGR00322">
    <property type="entry name" value="diphth2_R"/>
    <property type="match status" value="1"/>
</dbReference>
<dbReference type="PANTHER" id="PTHR10762:SF1">
    <property type="entry name" value="2-(3-AMINO-3-CARBOXYPROPYL)HISTIDINE SYNTHASE SUBUNIT 1"/>
    <property type="match status" value="1"/>
</dbReference>
<dbReference type="PANTHER" id="PTHR10762">
    <property type="entry name" value="DIPHTHAMIDE BIOSYNTHESIS PROTEIN"/>
    <property type="match status" value="1"/>
</dbReference>
<dbReference type="Pfam" id="PF01866">
    <property type="entry name" value="Diphthamide_syn"/>
    <property type="match status" value="1"/>
</dbReference>
<dbReference type="PIRSF" id="PIRSF004967">
    <property type="entry name" value="DPH1"/>
    <property type="match status" value="1"/>
</dbReference>
<dbReference type="SFLD" id="SFLDG01121">
    <property type="entry name" value="Diphthamide_biosynthesis"/>
    <property type="match status" value="1"/>
</dbReference>
<dbReference type="SFLD" id="SFLDS00032">
    <property type="entry name" value="Radical_SAM_3-amino-3-carboxyp"/>
    <property type="match status" value="1"/>
</dbReference>
<protein>
    <recommendedName>
        <fullName evidence="5">2-(3-amino-3-carboxypropyl)histidine synthase subunit 1</fullName>
        <ecNumber evidence="3">2.5.1.108</ecNumber>
    </recommendedName>
    <alternativeName>
        <fullName>Diphthamide biosynthesis protein 1</fullName>
    </alternativeName>
    <alternativeName>
        <fullName evidence="5">Diphtheria toxin resistance protein 1</fullName>
    </alternativeName>
    <alternativeName>
        <fullName evidence="5">S-adenosyl-L-methionine:L-histidine 3-amino-3-carboxypropyltransferase 1</fullName>
    </alternativeName>
</protein>
<keyword id="KW-0408">Iron</keyword>
<keyword id="KW-0411">Iron-sulfur</keyword>
<keyword id="KW-0479">Metal-binding</keyword>
<keyword id="KW-1185">Reference proteome</keyword>
<keyword id="KW-0949">S-adenosyl-L-methionine</keyword>
<keyword id="KW-0808">Transferase</keyword>